<accession>Q5QTY6</accession>
<comment type="function">
    <text evidence="1">Required for maturation of 30S ribosomal subunits.</text>
</comment>
<comment type="subcellular location">
    <subcellularLocation>
        <location evidence="1">Cytoplasm</location>
    </subcellularLocation>
</comment>
<comment type="similarity">
    <text evidence="1">Belongs to the RimP family.</text>
</comment>
<proteinExistence type="inferred from homology"/>
<dbReference type="EMBL" id="AE017340">
    <property type="protein sequence ID" value="AAV81810.1"/>
    <property type="molecule type" value="Genomic_DNA"/>
</dbReference>
<dbReference type="RefSeq" id="WP_011234221.1">
    <property type="nucleotide sequence ID" value="NC_006512.1"/>
</dbReference>
<dbReference type="SMR" id="Q5QTY6"/>
<dbReference type="STRING" id="283942.IL0970"/>
<dbReference type="GeneID" id="41336130"/>
<dbReference type="KEGG" id="ilo:IL0970"/>
<dbReference type="eggNOG" id="COG0779">
    <property type="taxonomic scope" value="Bacteria"/>
</dbReference>
<dbReference type="HOGENOM" id="CLU_070525_1_1_6"/>
<dbReference type="OrthoDB" id="9805006at2"/>
<dbReference type="Proteomes" id="UP000001171">
    <property type="component" value="Chromosome"/>
</dbReference>
<dbReference type="GO" id="GO:0005829">
    <property type="term" value="C:cytosol"/>
    <property type="evidence" value="ECO:0007669"/>
    <property type="project" value="TreeGrafter"/>
</dbReference>
<dbReference type="GO" id="GO:0000028">
    <property type="term" value="P:ribosomal small subunit assembly"/>
    <property type="evidence" value="ECO:0007669"/>
    <property type="project" value="TreeGrafter"/>
</dbReference>
<dbReference type="GO" id="GO:0006412">
    <property type="term" value="P:translation"/>
    <property type="evidence" value="ECO:0007669"/>
    <property type="project" value="TreeGrafter"/>
</dbReference>
<dbReference type="CDD" id="cd01734">
    <property type="entry name" value="YlxS_C"/>
    <property type="match status" value="1"/>
</dbReference>
<dbReference type="FunFam" id="3.30.300.70:FF:000001">
    <property type="entry name" value="Ribosome maturation factor RimP"/>
    <property type="match status" value="1"/>
</dbReference>
<dbReference type="Gene3D" id="2.30.30.180">
    <property type="entry name" value="Ribosome maturation factor RimP, C-terminal domain"/>
    <property type="match status" value="1"/>
</dbReference>
<dbReference type="Gene3D" id="3.30.300.70">
    <property type="entry name" value="RimP-like superfamily, N-terminal"/>
    <property type="match status" value="1"/>
</dbReference>
<dbReference type="HAMAP" id="MF_01077">
    <property type="entry name" value="RimP"/>
    <property type="match status" value="1"/>
</dbReference>
<dbReference type="InterPro" id="IPR003728">
    <property type="entry name" value="Ribosome_maturation_RimP"/>
</dbReference>
<dbReference type="InterPro" id="IPR028998">
    <property type="entry name" value="RimP_C"/>
</dbReference>
<dbReference type="InterPro" id="IPR036847">
    <property type="entry name" value="RimP_C_sf"/>
</dbReference>
<dbReference type="InterPro" id="IPR028989">
    <property type="entry name" value="RimP_N"/>
</dbReference>
<dbReference type="InterPro" id="IPR035956">
    <property type="entry name" value="RimP_N_sf"/>
</dbReference>
<dbReference type="NCBIfam" id="NF000927">
    <property type="entry name" value="PRK00092.1-1"/>
    <property type="match status" value="1"/>
</dbReference>
<dbReference type="PANTHER" id="PTHR33867">
    <property type="entry name" value="RIBOSOME MATURATION FACTOR RIMP"/>
    <property type="match status" value="1"/>
</dbReference>
<dbReference type="PANTHER" id="PTHR33867:SF1">
    <property type="entry name" value="RIBOSOME MATURATION FACTOR RIMP"/>
    <property type="match status" value="1"/>
</dbReference>
<dbReference type="Pfam" id="PF17384">
    <property type="entry name" value="DUF150_C"/>
    <property type="match status" value="1"/>
</dbReference>
<dbReference type="Pfam" id="PF02576">
    <property type="entry name" value="RimP_N"/>
    <property type="match status" value="1"/>
</dbReference>
<dbReference type="SUPFAM" id="SSF74942">
    <property type="entry name" value="YhbC-like, C-terminal domain"/>
    <property type="match status" value="1"/>
</dbReference>
<dbReference type="SUPFAM" id="SSF75420">
    <property type="entry name" value="YhbC-like, N-terminal domain"/>
    <property type="match status" value="1"/>
</dbReference>
<protein>
    <recommendedName>
        <fullName evidence="1">Ribosome maturation factor RimP</fullName>
    </recommendedName>
</protein>
<feature type="chain" id="PRO_0000229244" description="Ribosome maturation factor RimP">
    <location>
        <begin position="1"/>
        <end position="152"/>
    </location>
</feature>
<keyword id="KW-0963">Cytoplasm</keyword>
<keyword id="KW-1185">Reference proteome</keyword>
<keyword id="KW-0690">Ribosome biogenesis</keyword>
<sequence length="152" mass="17204">MANLQERLTDIIRPAVEALEFELWGVEFIRAGKFSTLRVYIDHPEGISVDNCADVSYQVSSLLDVEDPINVEYNLEVSSPGMERPFFNAQQMQPYINETVAFELVAAQKNKRKFKAELIAVEGEELTLAVDNDTLQVNMRDVKNAHLVPAFD</sequence>
<gene>
    <name evidence="1" type="primary">rimP</name>
    <name type="ordered locus">IL0970</name>
</gene>
<organism>
    <name type="scientific">Idiomarina loihiensis (strain ATCC BAA-735 / DSM 15497 / L2-TR)</name>
    <dbReference type="NCBI Taxonomy" id="283942"/>
    <lineage>
        <taxon>Bacteria</taxon>
        <taxon>Pseudomonadati</taxon>
        <taxon>Pseudomonadota</taxon>
        <taxon>Gammaproteobacteria</taxon>
        <taxon>Alteromonadales</taxon>
        <taxon>Idiomarinaceae</taxon>
        <taxon>Idiomarina</taxon>
    </lineage>
</organism>
<reference key="1">
    <citation type="journal article" date="2004" name="Proc. Natl. Acad. Sci. U.S.A.">
        <title>Genome sequence of the deep-sea gamma-proteobacterium Idiomarina loihiensis reveals amino acid fermentation as a source of carbon and energy.</title>
        <authorList>
            <person name="Hou S."/>
            <person name="Saw J.H."/>
            <person name="Lee K.S."/>
            <person name="Freitas T.A."/>
            <person name="Belisle C."/>
            <person name="Kawarabayasi Y."/>
            <person name="Donachie S.P."/>
            <person name="Pikina A."/>
            <person name="Galperin M.Y."/>
            <person name="Koonin E.V."/>
            <person name="Makarova K.S."/>
            <person name="Omelchenko M.V."/>
            <person name="Sorokin A."/>
            <person name="Wolf Y.I."/>
            <person name="Li Q.X."/>
            <person name="Keum Y.S."/>
            <person name="Campbell S."/>
            <person name="Denery J."/>
            <person name="Aizawa S."/>
            <person name="Shibata S."/>
            <person name="Malahoff A."/>
            <person name="Alam M."/>
        </authorList>
    </citation>
    <scope>NUCLEOTIDE SEQUENCE [LARGE SCALE GENOMIC DNA]</scope>
    <source>
        <strain>ATCC BAA-735 / DSM 15497 / L2-TR</strain>
    </source>
</reference>
<evidence type="ECO:0000255" key="1">
    <source>
        <dbReference type="HAMAP-Rule" id="MF_01077"/>
    </source>
</evidence>
<name>RIMP_IDILO</name>